<reference key="1">
    <citation type="submission" date="2003-06" db="EMBL/GenBank/DDBJ databases">
        <title>The complete genome sequence of Haemophilus ducreyi.</title>
        <authorList>
            <person name="Munson R.S. Jr."/>
            <person name="Ray W.C."/>
            <person name="Mahairas G."/>
            <person name="Sabo P."/>
            <person name="Mungur R."/>
            <person name="Johnson L."/>
            <person name="Nguyen D."/>
            <person name="Wang J."/>
            <person name="Forst C."/>
            <person name="Hood L."/>
        </authorList>
    </citation>
    <scope>NUCLEOTIDE SEQUENCE [LARGE SCALE GENOMIC DNA]</scope>
    <source>
        <strain>35000HP / ATCC 700724</strain>
    </source>
</reference>
<accession>Q7VN48</accession>
<organism>
    <name type="scientific">Haemophilus ducreyi (strain 35000HP / ATCC 700724)</name>
    <dbReference type="NCBI Taxonomy" id="233412"/>
    <lineage>
        <taxon>Bacteria</taxon>
        <taxon>Pseudomonadati</taxon>
        <taxon>Pseudomonadota</taxon>
        <taxon>Gammaproteobacteria</taxon>
        <taxon>Pasteurellales</taxon>
        <taxon>Pasteurellaceae</taxon>
        <taxon>Haemophilus</taxon>
    </lineage>
</organism>
<feature type="chain" id="PRO_0000198970" description="Nucleoid occlusion factor SlmA">
    <location>
        <begin position="1"/>
        <end position="202"/>
    </location>
</feature>
<feature type="domain" description="HTH tetR-type" evidence="1">
    <location>
        <begin position="14"/>
        <end position="75"/>
    </location>
</feature>
<feature type="DNA-binding region" description="H-T-H motif" evidence="1">
    <location>
        <begin position="38"/>
        <end position="57"/>
    </location>
</feature>
<comment type="function">
    <text evidence="1">Required for nucleoid occlusion (NO) phenomenon, which prevents Z-ring formation and cell division over the nucleoid. Acts as a DNA-associated cell division inhibitor that binds simultaneously chromosomal DNA and FtsZ, and disrupts the assembly of FtsZ polymers. SlmA-DNA-binding sequences (SBS) are dispersed on non-Ter regions of the chromosome, preventing FtsZ polymerization at these regions.</text>
</comment>
<comment type="subunit">
    <text evidence="1">Homodimer. Interacts with FtsZ.</text>
</comment>
<comment type="subcellular location">
    <subcellularLocation>
        <location evidence="1">Cytoplasm</location>
        <location evidence="1">Nucleoid</location>
    </subcellularLocation>
</comment>
<comment type="similarity">
    <text evidence="1">Belongs to the nucleoid occlusion factor SlmA family.</text>
</comment>
<keyword id="KW-0131">Cell cycle</keyword>
<keyword id="KW-0132">Cell division</keyword>
<keyword id="KW-0963">Cytoplasm</keyword>
<keyword id="KW-0238">DNA-binding</keyword>
<keyword id="KW-1185">Reference proteome</keyword>
<proteinExistence type="inferred from homology"/>
<name>SLMA_HAEDU</name>
<dbReference type="EMBL" id="AE017143">
    <property type="protein sequence ID" value="AAP95647.1"/>
    <property type="molecule type" value="Genomic_DNA"/>
</dbReference>
<dbReference type="RefSeq" id="WP_010944699.1">
    <property type="nucleotide sequence ID" value="NC_002940.2"/>
</dbReference>
<dbReference type="SMR" id="Q7VN48"/>
<dbReference type="STRING" id="233412.HD_0735"/>
<dbReference type="KEGG" id="hdu:HD_0735"/>
<dbReference type="eggNOG" id="COG1309">
    <property type="taxonomic scope" value="Bacteria"/>
</dbReference>
<dbReference type="HOGENOM" id="CLU_069356_5_0_6"/>
<dbReference type="OrthoDB" id="9179041at2"/>
<dbReference type="Proteomes" id="UP000001022">
    <property type="component" value="Chromosome"/>
</dbReference>
<dbReference type="GO" id="GO:0043590">
    <property type="term" value="C:bacterial nucleoid"/>
    <property type="evidence" value="ECO:0007669"/>
    <property type="project" value="UniProtKB-UniRule"/>
</dbReference>
<dbReference type="GO" id="GO:0005737">
    <property type="term" value="C:cytoplasm"/>
    <property type="evidence" value="ECO:0007669"/>
    <property type="project" value="UniProtKB-UniRule"/>
</dbReference>
<dbReference type="GO" id="GO:0043565">
    <property type="term" value="F:sequence-specific DNA binding"/>
    <property type="evidence" value="ECO:0007669"/>
    <property type="project" value="UniProtKB-UniRule"/>
</dbReference>
<dbReference type="GO" id="GO:0051301">
    <property type="term" value="P:cell division"/>
    <property type="evidence" value="ECO:0007669"/>
    <property type="project" value="UniProtKB-KW"/>
</dbReference>
<dbReference type="GO" id="GO:0010974">
    <property type="term" value="P:negative regulation of division septum assembly"/>
    <property type="evidence" value="ECO:0007669"/>
    <property type="project" value="InterPro"/>
</dbReference>
<dbReference type="Gene3D" id="1.10.357.10">
    <property type="entry name" value="Tetracycline Repressor, domain 2"/>
    <property type="match status" value="1"/>
</dbReference>
<dbReference type="HAMAP" id="MF_01839">
    <property type="entry name" value="NO_factor_SlmA"/>
    <property type="match status" value="1"/>
</dbReference>
<dbReference type="InterPro" id="IPR023772">
    <property type="entry name" value="DNA-bd_HTH_TetR-type_CS"/>
</dbReference>
<dbReference type="InterPro" id="IPR009057">
    <property type="entry name" value="Homeodomain-like_sf"/>
</dbReference>
<dbReference type="InterPro" id="IPR050624">
    <property type="entry name" value="HTH-type_Tx_Regulator"/>
</dbReference>
<dbReference type="InterPro" id="IPR001647">
    <property type="entry name" value="HTH_TetR"/>
</dbReference>
<dbReference type="InterPro" id="IPR023769">
    <property type="entry name" value="NO_SlmA"/>
</dbReference>
<dbReference type="InterPro" id="IPR054580">
    <property type="entry name" value="SlmA-like_C"/>
</dbReference>
<dbReference type="NCBIfam" id="NF007015">
    <property type="entry name" value="PRK09480.1"/>
    <property type="match status" value="1"/>
</dbReference>
<dbReference type="PANTHER" id="PTHR43479">
    <property type="entry name" value="ACREF/ENVCD OPERON REPRESSOR-RELATED"/>
    <property type="match status" value="1"/>
</dbReference>
<dbReference type="PANTHER" id="PTHR43479:SF11">
    <property type="entry name" value="ACREF_ENVCD OPERON REPRESSOR-RELATED"/>
    <property type="match status" value="1"/>
</dbReference>
<dbReference type="Pfam" id="PF22276">
    <property type="entry name" value="SlmA-like_C"/>
    <property type="match status" value="1"/>
</dbReference>
<dbReference type="Pfam" id="PF00440">
    <property type="entry name" value="TetR_N"/>
    <property type="match status" value="1"/>
</dbReference>
<dbReference type="SUPFAM" id="SSF46689">
    <property type="entry name" value="Homeodomain-like"/>
    <property type="match status" value="1"/>
</dbReference>
<dbReference type="PROSITE" id="PS01081">
    <property type="entry name" value="HTH_TETR_1"/>
    <property type="match status" value="1"/>
</dbReference>
<dbReference type="PROSITE" id="PS50977">
    <property type="entry name" value="HTH_TETR_2"/>
    <property type="match status" value="1"/>
</dbReference>
<gene>
    <name evidence="1" type="primary">slmA</name>
    <name type="ordered locus">HD_0735</name>
</gene>
<protein>
    <recommendedName>
        <fullName evidence="1">Nucleoid occlusion factor SlmA</fullName>
    </recommendedName>
</protein>
<sequence>MTEPLIKMPKKSVKERQQQVLEVLIGLLNSEQGMQRVTTERLAKAVGVSEGALYRYFPSKSKMFEALIERIEQTLTSYINASKRKENSTALAVKAILYTVIEFARKNPGVTRILTGHALMFENSELKLRVAKFFDGLELQFVNILQMRKLREGKAFQDERALAGYLVTFCEGQFLRLVRSNFSSNPHQHFEKQWSLIKPLFE</sequence>
<evidence type="ECO:0000255" key="1">
    <source>
        <dbReference type="HAMAP-Rule" id="MF_01839"/>
    </source>
</evidence>